<name>GPT2_YEAST</name>
<proteinExistence type="evidence at protein level"/>
<gene>
    <name type="primary">GPT2</name>
    <name evidence="12" type="synonym">GAT1</name>
    <name type="ordered locus">YKR067W</name>
</gene>
<accession>P36148</accession>
<accession>D6VXC8</accession>
<protein>
    <recommendedName>
        <fullName>Glycerol-3-phosphate O-acyltransferase 2</fullName>
        <shortName>G-3-P acyltransferase 2</shortName>
        <shortName>GPAT 2</shortName>
        <ecNumber evidence="4">2.3.1.15</ecNumber>
    </recommendedName>
    <alternativeName>
        <fullName>Dihydroxyacetone phosphate acyltransferase 2</fullName>
        <shortName>DHAP-AT 2</shortName>
        <ecNumber evidence="4">2.3.1.42</ecNumber>
    </alternativeName>
    <alternativeName>
        <fullName>Glycerol-3-phosphate / dihydroxyacetone phosphate acyltransferase 2</fullName>
    </alternativeName>
</protein>
<feature type="chain" id="PRO_0000195258" description="Glycerol-3-phosphate O-acyltransferase 2">
    <location>
        <begin position="1"/>
        <end position="743"/>
    </location>
</feature>
<feature type="topological domain" description="Lumenal" evidence="15 16">
    <location>
        <begin position="1"/>
        <end position="34"/>
    </location>
</feature>
<feature type="transmembrane region" description="Helical" evidence="16">
    <location>
        <begin position="35"/>
        <end position="55"/>
    </location>
</feature>
<feature type="topological domain" description="Cytoplasmic" evidence="15 16">
    <location>
        <begin position="56"/>
        <end position="442"/>
    </location>
</feature>
<feature type="transmembrane region" description="Helical" evidence="16">
    <location>
        <begin position="443"/>
        <end position="457"/>
    </location>
</feature>
<feature type="topological domain" description="Lumenal" evidence="15 16">
    <location>
        <position position="458"/>
    </location>
</feature>
<feature type="transmembrane region" description="Helical" evidence="16">
    <location>
        <begin position="459"/>
        <end position="473"/>
    </location>
</feature>
<feature type="topological domain" description="Cytoplasmic" evidence="15 16">
    <location>
        <begin position="474"/>
        <end position="501"/>
    </location>
</feature>
<feature type="transmembrane region" description="Helical" evidence="16">
    <location>
        <begin position="502"/>
        <end position="522"/>
    </location>
</feature>
<feature type="topological domain" description="Lumenal" evidence="15 16">
    <location>
        <begin position="523"/>
        <end position="531"/>
    </location>
</feature>
<feature type="transmembrane region" description="Helical" evidence="16">
    <location>
        <begin position="532"/>
        <end position="552"/>
    </location>
</feature>
<feature type="topological domain" description="Cytoplasmic" evidence="7 16">
    <location>
        <begin position="553"/>
        <end position="743"/>
    </location>
</feature>
<feature type="region of interest" description="Disordered" evidence="2">
    <location>
        <begin position="682"/>
        <end position="743"/>
    </location>
</feature>
<feature type="compositionally biased region" description="Acidic residues" evidence="2">
    <location>
        <begin position="691"/>
        <end position="700"/>
    </location>
</feature>
<feature type="modified residue" description="Phosphoserine" evidence="18">
    <location>
        <position position="632"/>
    </location>
</feature>
<feature type="modified residue" description="Phosphoserine" evidence="18">
    <location>
        <position position="637"/>
    </location>
</feature>
<feature type="modified residue" description="Phosphoserine" evidence="18">
    <location>
        <position position="647"/>
    </location>
</feature>
<feature type="modified residue" description="Phosphoserine" evidence="18">
    <location>
        <position position="651"/>
    </location>
</feature>
<feature type="modified residue" description="Phosphoserine" evidence="17 18">
    <location>
        <position position="654"/>
    </location>
</feature>
<feature type="modified residue" description="Phosphoserine" evidence="18">
    <location>
        <position position="657"/>
    </location>
</feature>
<feature type="modified residue" description="Phosphoserine" evidence="10 18">
    <location>
        <position position="664"/>
    </location>
</feature>
<feature type="modified residue" description="Phosphoserine" evidence="10 17 18">
    <location>
        <position position="668"/>
    </location>
</feature>
<feature type="modified residue" description="Phosphoserine" evidence="10 17 18">
    <location>
        <position position="671"/>
    </location>
</feature>
<feature type="modified residue" description="Phosphothreonine" evidence="18">
    <location>
        <position position="673"/>
    </location>
</feature>
<feature type="modified residue" description="Phosphoserine" evidence="18">
    <location>
        <position position="688"/>
    </location>
</feature>
<feature type="modified residue" description="Phosphothreonine" evidence="18">
    <location>
        <position position="692"/>
    </location>
</feature>
<feature type="modified residue" description="Phosphoserine" evidence="18">
    <location>
        <position position="693"/>
    </location>
</feature>
<feature type="mutagenesis site" description="In GAT1-TTA1; abolishes both GAT and DHAPAT activities." evidence="4">
    <original>G</original>
    <variation>D</variation>
    <location>
        <position position="262"/>
    </location>
</feature>
<feature type="mutagenesis site" description="In GPT2-3A; increases the enzyme activity of GPT2; when associated with A-668 and A-671.">
    <original>S</original>
    <variation>A</variation>
    <location>
        <position position="664"/>
    </location>
</feature>
<feature type="mutagenesis site" description="In GPT2-3A; increases the enzyme activity of GPT2; when associated with A-664 and A-671.">
    <original>S</original>
    <variation>A</variation>
    <location>
        <position position="668"/>
    </location>
</feature>
<feature type="mutagenesis site" description="In GPT2-3A; increases the enzyme activity of GPT2; when associated with A-664 and A-668.">
    <original>S</original>
    <variation>A</variation>
    <location>
        <position position="671"/>
    </location>
</feature>
<sequence length="743" mass="83645">MSAPAADHNAAKPIPHVPQASRRYKNSYNGFVYNIHTWLYDVSVFLFNILFTIFFREIKVRGAYNVPEVGVPTILVCAPHANQFIDPALVMSQTRLLKTSAGKSRSRMPCFVTAESSFKKRFISFFGHAMGGIPVPRIQDNLKPVDENLEIYAPDLKNHPEIIKGRSKNPQTTPVNFTKRFSAKSLLGLPDYLSNAQIKEIPDDETIILSSPFRTSKSKVVELLTNGTNFKYAEKIDNTETFQSVFDHLHTKGCVGIFPEGGSHDRPSLLPIKAGVAIMALGAVAADPTMKVAVVPCGLHYFHRNKFRSRAVLEYGEPIVVDGKYGEMYKDSPRETVSKLLKKITNSLFSVTENAPDYDTLMVIQAARRLYQPVKVRLPLPAIVEINRRLLFGYSKFKDDPRIIHLKKLVYDYNRKLDSVGLKDHQVMQLKTTKLEALRCFVTLIVRLIKFSVFAILSLPGSILFTPIFIICRVYSEKKAKEGLKKSLVKIKGTDLLATWKLIVALILAPILYVTYSILLIILARKQHYCRIWVPSNNAFIQFVYFYALLVFTTYSSLKTGEIGVDLFKSLRPLFVSIVYPGKKIEEIQTTRKNLSLELTAVCNDLGPLVFPDYDKLATEIFSKRDGYDVSSDAESSISRMSVQSRSRSSSIHSIGSLASNALSRVNSRGSLTDIPIFSDAKQGQWKSEGETSEDEDEFDEKNPAIVQTARSSDLNKENSRNTNISSKIASLVRQKREHEKKE</sequence>
<dbReference type="EC" id="2.3.1.15" evidence="4"/>
<dbReference type="EC" id="2.3.1.42" evidence="4"/>
<dbReference type="EMBL" id="AJ311354">
    <property type="protein sequence ID" value="CAC85303.1"/>
    <property type="molecule type" value="Genomic_DNA"/>
</dbReference>
<dbReference type="EMBL" id="Z28292">
    <property type="protein sequence ID" value="CAA82146.1"/>
    <property type="molecule type" value="Genomic_DNA"/>
</dbReference>
<dbReference type="EMBL" id="BK006944">
    <property type="protein sequence ID" value="DAA09218.1"/>
    <property type="molecule type" value="Genomic_DNA"/>
</dbReference>
<dbReference type="PIR" id="S38143">
    <property type="entry name" value="S38143"/>
</dbReference>
<dbReference type="RefSeq" id="NP_012993.3">
    <property type="nucleotide sequence ID" value="NM_001179857.3"/>
</dbReference>
<dbReference type="SMR" id="P36148"/>
<dbReference type="BioGRID" id="34198">
    <property type="interactions" value="189"/>
</dbReference>
<dbReference type="DIP" id="DIP-6620N"/>
<dbReference type="FunCoup" id="P36148">
    <property type="interactions" value="2549"/>
</dbReference>
<dbReference type="IntAct" id="P36148">
    <property type="interactions" value="59"/>
</dbReference>
<dbReference type="MINT" id="P36148"/>
<dbReference type="STRING" id="4932.YKR067W"/>
<dbReference type="SwissLipids" id="SLP:000000047"/>
<dbReference type="iPTMnet" id="P36148"/>
<dbReference type="PaxDb" id="4932-YKR067W"/>
<dbReference type="PeptideAtlas" id="P36148"/>
<dbReference type="EnsemblFungi" id="YKR067W_mRNA">
    <property type="protein sequence ID" value="YKR067W"/>
    <property type="gene ID" value="YKR067W"/>
</dbReference>
<dbReference type="GeneID" id="853941"/>
<dbReference type="KEGG" id="sce:YKR067W"/>
<dbReference type="AGR" id="SGD:S000001775"/>
<dbReference type="SGD" id="S000001775">
    <property type="gene designation" value="GPT2"/>
</dbReference>
<dbReference type="VEuPathDB" id="FungiDB:YKR067W"/>
<dbReference type="eggNOG" id="ENOG502QQ2N">
    <property type="taxonomic scope" value="Eukaryota"/>
</dbReference>
<dbReference type="GeneTree" id="ENSGT00940000176524"/>
<dbReference type="HOGENOM" id="CLU_007860_1_0_1"/>
<dbReference type="InParanoid" id="P36148"/>
<dbReference type="OMA" id="RSRQTCF"/>
<dbReference type="OrthoDB" id="2427554at2759"/>
<dbReference type="BioCyc" id="MetaCyc:MONOMER3O-4095"/>
<dbReference type="BioCyc" id="YEAST:MONOMER3O-4095"/>
<dbReference type="BRENDA" id="2.3.1.15">
    <property type="organism ID" value="984"/>
</dbReference>
<dbReference type="SABIO-RK" id="P36148"/>
<dbReference type="UniPathway" id="UPA00557">
    <property type="reaction ID" value="UER00612"/>
</dbReference>
<dbReference type="BioGRID-ORCS" id="853941">
    <property type="hits" value="7 hits in 10 CRISPR screens"/>
</dbReference>
<dbReference type="PRO" id="PR:P36148"/>
<dbReference type="Proteomes" id="UP000002311">
    <property type="component" value="Chromosome XI"/>
</dbReference>
<dbReference type="RNAct" id="P36148">
    <property type="molecule type" value="protein"/>
</dbReference>
<dbReference type="GO" id="GO:0005737">
    <property type="term" value="C:cytoplasm"/>
    <property type="evidence" value="ECO:0007005"/>
    <property type="project" value="SGD"/>
</dbReference>
<dbReference type="GO" id="GO:0005783">
    <property type="term" value="C:endoplasmic reticulum"/>
    <property type="evidence" value="ECO:0000314"/>
    <property type="project" value="SGD"/>
</dbReference>
<dbReference type="GO" id="GO:0005789">
    <property type="term" value="C:endoplasmic reticulum membrane"/>
    <property type="evidence" value="ECO:0007669"/>
    <property type="project" value="UniProtKB-SubCell"/>
</dbReference>
<dbReference type="GO" id="GO:0005811">
    <property type="term" value="C:lipid droplet"/>
    <property type="evidence" value="ECO:0000314"/>
    <property type="project" value="SGD"/>
</dbReference>
<dbReference type="GO" id="GO:0004366">
    <property type="term" value="F:glycerol-3-phosphate O-acyltransferase activity"/>
    <property type="evidence" value="ECO:0000314"/>
    <property type="project" value="SGD"/>
</dbReference>
<dbReference type="GO" id="GO:0016287">
    <property type="term" value="F:glycerone-phosphate O-acyltransferase activity"/>
    <property type="evidence" value="ECO:0000314"/>
    <property type="project" value="SGD"/>
</dbReference>
<dbReference type="GO" id="GO:0016024">
    <property type="term" value="P:CDP-diacylglycerol biosynthetic process"/>
    <property type="evidence" value="ECO:0007669"/>
    <property type="project" value="UniProtKB-UniPathway"/>
</dbReference>
<dbReference type="GO" id="GO:0008654">
    <property type="term" value="P:phospholipid biosynthetic process"/>
    <property type="evidence" value="ECO:0000314"/>
    <property type="project" value="SGD"/>
</dbReference>
<dbReference type="GO" id="GO:0090207">
    <property type="term" value="P:regulation of triglyceride metabolic process"/>
    <property type="evidence" value="ECO:0000315"/>
    <property type="project" value="SGD"/>
</dbReference>
<dbReference type="InterPro" id="IPR052744">
    <property type="entry name" value="GPAT/DAPAT"/>
</dbReference>
<dbReference type="InterPro" id="IPR002123">
    <property type="entry name" value="Plipid/glycerol_acylTrfase"/>
</dbReference>
<dbReference type="PANTHER" id="PTHR31605">
    <property type="entry name" value="GLYCEROL-3-PHOSPHATE O-ACYLTRANSFERASE 1"/>
    <property type="match status" value="1"/>
</dbReference>
<dbReference type="PANTHER" id="PTHR31605:SF2">
    <property type="entry name" value="GLYCEROL-3-PHOSPHATE O-ACYLTRANSFERASE 2"/>
    <property type="match status" value="1"/>
</dbReference>
<dbReference type="SMART" id="SM00563">
    <property type="entry name" value="PlsC"/>
    <property type="match status" value="1"/>
</dbReference>
<dbReference type="SUPFAM" id="SSF69593">
    <property type="entry name" value="Glycerol-3-phosphate (1)-acyltransferase"/>
    <property type="match status" value="1"/>
</dbReference>
<reference key="1">
    <citation type="journal article" date="2001" name="J. Biol. Chem.">
        <title>The initial step of the glycerolipid pathway: identification of glycerol-3-phosphate / dihydroxyacetone phosphate dual substrate acyltransferases in Saccharomyces cerevisiae.</title>
        <authorList>
            <person name="Zheng Z."/>
            <person name="Zou J."/>
        </authorList>
    </citation>
    <scope>NUCLEOTIDE SEQUENCE [GENOMIC DNA]</scope>
    <scope>FUNCTION</scope>
    <scope>CATALYTIC ACTIVITY</scope>
    <scope>MUTAGENESIS OF GLY-262</scope>
    <source>
        <strain>ATCC 204660 / DBY746</strain>
    </source>
</reference>
<reference key="2">
    <citation type="journal article" date="1994" name="Nature">
        <title>Complete DNA sequence of yeast chromosome XI.</title>
        <authorList>
            <person name="Dujon B."/>
            <person name="Alexandraki D."/>
            <person name="Andre B."/>
            <person name="Ansorge W."/>
            <person name="Baladron V."/>
            <person name="Ballesta J.P.G."/>
            <person name="Banrevi A."/>
            <person name="Bolle P.-A."/>
            <person name="Bolotin-Fukuhara M."/>
            <person name="Bossier P."/>
            <person name="Bou G."/>
            <person name="Boyer J."/>
            <person name="Buitrago M.J."/>
            <person name="Cheret G."/>
            <person name="Colleaux L."/>
            <person name="Daignan-Fornier B."/>
            <person name="del Rey F."/>
            <person name="Dion C."/>
            <person name="Domdey H."/>
            <person name="Duesterhoeft A."/>
            <person name="Duesterhus S."/>
            <person name="Entian K.-D."/>
            <person name="Erfle H."/>
            <person name="Esteban P.F."/>
            <person name="Feldmann H."/>
            <person name="Fernandes L."/>
            <person name="Fobo G.M."/>
            <person name="Fritz C."/>
            <person name="Fukuhara H."/>
            <person name="Gabel C."/>
            <person name="Gaillon L."/>
            <person name="Garcia-Cantalejo J.M."/>
            <person name="Garcia-Ramirez J.J."/>
            <person name="Gent M.E."/>
            <person name="Ghazvini M."/>
            <person name="Goffeau A."/>
            <person name="Gonzalez A."/>
            <person name="Grothues D."/>
            <person name="Guerreiro P."/>
            <person name="Hegemann J.H."/>
            <person name="Hewitt N."/>
            <person name="Hilger F."/>
            <person name="Hollenberg C.P."/>
            <person name="Horaitis O."/>
            <person name="Indge K.J."/>
            <person name="Jacquier A."/>
            <person name="James C.M."/>
            <person name="Jauniaux J.-C."/>
            <person name="Jimenez A."/>
            <person name="Keuchel H."/>
            <person name="Kirchrath L."/>
            <person name="Kleine K."/>
            <person name="Koetter P."/>
            <person name="Legrain P."/>
            <person name="Liebl S."/>
            <person name="Louis E.J."/>
            <person name="Maia e Silva A."/>
            <person name="Marck C."/>
            <person name="Monnier A.-L."/>
            <person name="Moestl D."/>
            <person name="Mueller S."/>
            <person name="Obermaier B."/>
            <person name="Oliver S.G."/>
            <person name="Pallier C."/>
            <person name="Pascolo S."/>
            <person name="Pfeiffer F."/>
            <person name="Philippsen P."/>
            <person name="Planta R.J."/>
            <person name="Pohl F.M."/>
            <person name="Pohl T.M."/>
            <person name="Poehlmann R."/>
            <person name="Portetelle D."/>
            <person name="Purnelle B."/>
            <person name="Puzos V."/>
            <person name="Ramezani Rad M."/>
            <person name="Rasmussen S.W."/>
            <person name="Remacha M.A."/>
            <person name="Revuelta J.L."/>
            <person name="Richard G.-F."/>
            <person name="Rieger M."/>
            <person name="Rodrigues-Pousada C."/>
            <person name="Rose M."/>
            <person name="Rupp T."/>
            <person name="Santos M.A."/>
            <person name="Schwager C."/>
            <person name="Sensen C."/>
            <person name="Skala J."/>
            <person name="Soares H."/>
            <person name="Sor F."/>
            <person name="Stegemann J."/>
            <person name="Tettelin H."/>
            <person name="Thierry A."/>
            <person name="Tzermia M."/>
            <person name="Urrestarazu L.A."/>
            <person name="van Dyck L."/>
            <person name="van Vliet-Reedijk J.C."/>
            <person name="Valens M."/>
            <person name="Vandenbol M."/>
            <person name="Vilela C."/>
            <person name="Vissers S."/>
            <person name="von Wettstein D."/>
            <person name="Voss H."/>
            <person name="Wiemann S."/>
            <person name="Xu G."/>
            <person name="Zimmermann J."/>
            <person name="Haasemann M."/>
            <person name="Becker I."/>
            <person name="Mewes H.-W."/>
        </authorList>
    </citation>
    <scope>NUCLEOTIDE SEQUENCE [LARGE SCALE GENOMIC DNA]</scope>
    <source>
        <strain>ATCC 204508 / S288c</strain>
    </source>
</reference>
<reference key="3">
    <citation type="journal article" date="2014" name="G3 (Bethesda)">
        <title>The reference genome sequence of Saccharomyces cerevisiae: Then and now.</title>
        <authorList>
            <person name="Engel S.R."/>
            <person name="Dietrich F.S."/>
            <person name="Fisk D.G."/>
            <person name="Binkley G."/>
            <person name="Balakrishnan R."/>
            <person name="Costanzo M.C."/>
            <person name="Dwight S.S."/>
            <person name="Hitz B.C."/>
            <person name="Karra K."/>
            <person name="Nash R.S."/>
            <person name="Weng S."/>
            <person name="Wong E.D."/>
            <person name="Lloyd P."/>
            <person name="Skrzypek M.S."/>
            <person name="Miyasato S.R."/>
            <person name="Simison M."/>
            <person name="Cherry J.M."/>
        </authorList>
    </citation>
    <scope>GENOME REANNOTATION</scope>
    <source>
        <strain>ATCC 204508 / S288c</strain>
    </source>
</reference>
<reference key="4">
    <citation type="journal article" date="1997" name="J. Bacteriol.">
        <title>Biosynthesis of phosphatidic acid in lipid particles and endoplasmic reticulum of Saccharomyces cerevisiae.</title>
        <authorList>
            <person name="Athenstaedt K."/>
            <person name="Daum G."/>
        </authorList>
    </citation>
    <scope>SUBCELLULAR LOCATION</scope>
</reference>
<reference key="5">
    <citation type="journal article" date="1999" name="J. Bacteriol.">
        <title>Redundant systems of phosphatidic acid biosynthesis via acylation of glycerol-3-phosphate or dihydroxyacetone phosphate in the yeast Saccharomyces cerevisiae.</title>
        <authorList>
            <person name="Athenstaedt K."/>
            <person name="Weys S."/>
            <person name="Paltauf F."/>
            <person name="Daum G."/>
        </authorList>
    </citation>
    <scope>FUNCTION</scope>
</reference>
<reference key="6">
    <citation type="journal article" date="2002" name="J. Biol. Chem.">
        <title>Differential partitioning of lipids metabolized by separate yeast glycerol-3-phosphate acyltransferases reveals that phospholipase D generation of phosphatidic acid mediates sensitivity to choline-containing lysolipids and drugs.</title>
        <authorList>
            <person name="Zaremberg V."/>
            <person name="McMaster C.R."/>
        </authorList>
    </citation>
    <scope>FUNCTION</scope>
</reference>
<reference key="7">
    <citation type="journal article" date="2003" name="Nature">
        <title>Global analysis of protein expression in yeast.</title>
        <authorList>
            <person name="Ghaemmaghami S."/>
            <person name="Huh W.-K."/>
            <person name="Bower K."/>
            <person name="Howson R.W."/>
            <person name="Belle A."/>
            <person name="Dephoure N."/>
            <person name="O'Shea E.K."/>
            <person name="Weissman J.S."/>
        </authorList>
    </citation>
    <scope>LEVEL OF PROTEIN EXPRESSION [LARGE SCALE ANALYSIS]</scope>
</reference>
<reference key="8">
    <citation type="journal article" date="2006" name="Proc. Natl. Acad. Sci. U.S.A.">
        <title>A global topology map of the Saccharomyces cerevisiae membrane proteome.</title>
        <authorList>
            <person name="Kim H."/>
            <person name="Melen K."/>
            <person name="Oesterberg M."/>
            <person name="von Heijne G."/>
        </authorList>
    </citation>
    <scope>TOPOLOGY [LARGE SCALE ANALYSIS]</scope>
    <source>
        <strain>ATCC 208353 / W303-1A</strain>
    </source>
</reference>
<reference key="9">
    <citation type="journal article" date="2007" name="J. Proteome Res.">
        <title>Large-scale phosphorylation analysis of alpha-factor-arrested Saccharomyces cerevisiae.</title>
        <authorList>
            <person name="Li X."/>
            <person name="Gerber S.A."/>
            <person name="Rudner A.D."/>
            <person name="Beausoleil S.A."/>
            <person name="Haas W."/>
            <person name="Villen J."/>
            <person name="Elias J.E."/>
            <person name="Gygi S.P."/>
        </authorList>
    </citation>
    <scope>PHOSPHORYLATION [LARGE SCALE ANALYSIS] AT SER-654; SER-668 AND SER-671</scope>
    <scope>IDENTIFICATION BY MASS SPECTROMETRY [LARGE SCALE ANALYSIS]</scope>
    <source>
        <strain>ADR376</strain>
    </source>
</reference>
<reference key="10">
    <citation type="journal article" date="2008" name="Mol. Cell. Proteomics">
        <title>A multidimensional chromatography technology for in-depth phosphoproteome analysis.</title>
        <authorList>
            <person name="Albuquerque C.P."/>
            <person name="Smolka M.B."/>
            <person name="Payne S.H."/>
            <person name="Bafna V."/>
            <person name="Eng J."/>
            <person name="Zhou H."/>
        </authorList>
    </citation>
    <scope>IDENTIFICATION BY MASS SPECTROMETRY [LARGE SCALE ANALYSIS]</scope>
</reference>
<reference key="11">
    <citation type="journal article" date="2009" name="Eukaryot. Cell">
        <title>Glycerol-3-phosphate acyltransferases gat1p and gat2p are microsomal phosphoproteins with differential contributions to polarized cell growth.</title>
        <authorList>
            <person name="Bratschi M.W."/>
            <person name="Burrowes D.P."/>
            <person name="Kulaga A."/>
            <person name="Cheung J.F."/>
            <person name="Alvarez A.L."/>
            <person name="Kearley J."/>
            <person name="Zaremberg V."/>
        </authorList>
    </citation>
    <scope>SUBCELLULAR LOCATION</scope>
</reference>
<reference key="12">
    <citation type="journal article" date="2009" name="Science">
        <title>Global analysis of Cdk1 substrate phosphorylation sites provides insights into evolution.</title>
        <authorList>
            <person name="Holt L.J."/>
            <person name="Tuch B.B."/>
            <person name="Villen J."/>
            <person name="Johnson A.D."/>
            <person name="Gygi S.P."/>
            <person name="Morgan D.O."/>
        </authorList>
    </citation>
    <scope>PHOSPHORYLATION [LARGE SCALE ANALYSIS] AT SER-632; SER-637; SER-647; SER-651; SER-654; SER-657; SER-664; SER-668; SER-671; THR-673; SER-688; THR-692 AND SER-693</scope>
    <scope>IDENTIFICATION BY MASS SPECTROMETRY [LARGE SCALE ANALYSIS]</scope>
</reference>
<reference key="13">
    <citation type="journal article" date="2012" name="J. Biol. Chem.">
        <title>Controlling lipid fluxes at glycerol-3-phosphate acyltransferase step in yeast: unique contribution of Gat1p to oleic acid-induced lipid particle formation.</title>
        <authorList>
            <person name="Marr N."/>
            <person name="Foglia J."/>
            <person name="Terebiznik M."/>
            <person name="Athenstaedt K."/>
            <person name="Zaremberg V."/>
        </authorList>
    </citation>
    <scope>SUBCELLULAR LOCATION</scope>
</reference>
<reference key="14">
    <citation type="journal article" date="2017" name="PLoS ONE">
        <title>Chemical crosslinking and mass spectrometry to elucidate the topology of integral membrane proteins.</title>
        <authorList>
            <person name="Debelyy M.O."/>
            <person name="Waridel P."/>
            <person name="Quadroni M."/>
            <person name="Schneiter R."/>
            <person name="Conzelmann A."/>
        </authorList>
    </citation>
    <scope>TOPOLOGY</scope>
</reference>
<reference key="15">
    <citation type="journal article" date="2019" name="Biochim. Biophys. Acta">
        <title>Phosphorylation of the lipid droplet localized glycerol-3-phosphate acyltransferase Gpt2 prevents a futile triacylglycerol cycle in yeast.</title>
        <authorList>
            <person name="Kiegerl B."/>
            <person name="Tavassoli M."/>
            <person name="Smart H."/>
            <person name="Shabits B.N."/>
            <person name="Zaremberg V."/>
            <person name="Athenstaedt K."/>
        </authorList>
    </citation>
    <scope>FUNCTION</scope>
    <scope>SUBCELLULAR LOCATION</scope>
    <scope>MUTAGENESIS OF SER-664; SER-668 AND SER-671</scope>
    <scope>PHOSPHORYLATION AT SER-664; SER-668 AND SER-671</scope>
</reference>
<organism>
    <name type="scientific">Saccharomyces cerevisiae (strain ATCC 204508 / S288c)</name>
    <name type="common">Baker's yeast</name>
    <dbReference type="NCBI Taxonomy" id="559292"/>
    <lineage>
        <taxon>Eukaryota</taxon>
        <taxon>Fungi</taxon>
        <taxon>Dikarya</taxon>
        <taxon>Ascomycota</taxon>
        <taxon>Saccharomycotina</taxon>
        <taxon>Saccharomycetes</taxon>
        <taxon>Saccharomycetales</taxon>
        <taxon>Saccharomycetaceae</taxon>
        <taxon>Saccharomyces</taxon>
    </lineage>
</organism>
<keyword id="KW-0012">Acyltransferase</keyword>
<keyword id="KW-0256">Endoplasmic reticulum</keyword>
<keyword id="KW-0444">Lipid biosynthesis</keyword>
<keyword id="KW-0551">Lipid droplet</keyword>
<keyword id="KW-0443">Lipid metabolism</keyword>
<keyword id="KW-0472">Membrane</keyword>
<keyword id="KW-0594">Phospholipid biosynthesis</keyword>
<keyword id="KW-1208">Phospholipid metabolism</keyword>
<keyword id="KW-0597">Phosphoprotein</keyword>
<keyword id="KW-1185">Reference proteome</keyword>
<keyword id="KW-0808">Transferase</keyword>
<keyword id="KW-0812">Transmembrane</keyword>
<keyword id="KW-1133">Transmembrane helix</keyword>
<comment type="function">
    <text evidence="3 4 5 10">Dual substrate-specific glycerol-3-phosphate/dihydroxyacetone phosphate sn-1 acyltransferase, catalyzing the first and committed reaction in the de novo synthesis of glycerophospholipids and triacylglycerols (TAGs). Can use both Gly-3-P and dihydroxyacetone phosphate with similar efficiencies and has a broad fatty acyl-CoA specificity profile. Transfers a fatty acid from fatty acyl-CoA to the sn-1 position of glycerol-3-phosphate to produce lysophosphatidic acid (LysoPA). These lipids not only are precursors of glycerolipids, but also are dynamic components of signal transduction systems that control cell physiology.</text>
</comment>
<comment type="catalytic activity">
    <reaction evidence="4">
        <text>sn-glycerol 3-phosphate + an acyl-CoA = a 1-acyl-sn-glycero-3-phosphate + CoA</text>
        <dbReference type="Rhea" id="RHEA:15325"/>
        <dbReference type="ChEBI" id="CHEBI:57287"/>
        <dbReference type="ChEBI" id="CHEBI:57597"/>
        <dbReference type="ChEBI" id="CHEBI:57970"/>
        <dbReference type="ChEBI" id="CHEBI:58342"/>
        <dbReference type="EC" id="2.3.1.15"/>
    </reaction>
</comment>
<comment type="catalytic activity">
    <reaction evidence="4">
        <text>dihydroxyacetone phosphate + an acyl-CoA = a 1-acylglycerone 3-phosphate + CoA</text>
        <dbReference type="Rhea" id="RHEA:17657"/>
        <dbReference type="ChEBI" id="CHEBI:57287"/>
        <dbReference type="ChEBI" id="CHEBI:57534"/>
        <dbReference type="ChEBI" id="CHEBI:57642"/>
        <dbReference type="ChEBI" id="CHEBI:58342"/>
        <dbReference type="EC" id="2.3.1.42"/>
    </reaction>
</comment>
<comment type="catalytic activity">
    <reaction evidence="4">
        <text>sn-glycerol 3-phosphate + hexadecanoyl-CoA = 1-hexadecanoyl-sn-glycero-3-phosphate + CoA</text>
        <dbReference type="Rhea" id="RHEA:35723"/>
        <dbReference type="ChEBI" id="CHEBI:57287"/>
        <dbReference type="ChEBI" id="CHEBI:57379"/>
        <dbReference type="ChEBI" id="CHEBI:57518"/>
        <dbReference type="ChEBI" id="CHEBI:57597"/>
    </reaction>
    <physiologicalReaction direction="left-to-right" evidence="14">
        <dbReference type="Rhea" id="RHEA:35724"/>
    </physiologicalReaction>
</comment>
<comment type="catalytic activity">
    <reaction evidence="4">
        <text>(9Z)-hexadecenoyl-CoA + sn-glycerol 3-phosphate = 1-(9Z-hexadecenoyl)-sn-glycero-3-phosphate + CoA</text>
        <dbReference type="Rhea" id="RHEA:44188"/>
        <dbReference type="ChEBI" id="CHEBI:57287"/>
        <dbReference type="ChEBI" id="CHEBI:57597"/>
        <dbReference type="ChEBI" id="CHEBI:61540"/>
        <dbReference type="ChEBI" id="CHEBI:74694"/>
    </reaction>
    <physiologicalReaction direction="left-to-right" evidence="14">
        <dbReference type="Rhea" id="RHEA:44189"/>
    </physiologicalReaction>
</comment>
<comment type="catalytic activity">
    <reaction evidence="4">
        <text>sn-glycerol 3-phosphate + octadecanoyl-CoA = 1-octadecanoyl-sn-glycero-3-phosphate + CoA</text>
        <dbReference type="Rhea" id="RHEA:37195"/>
        <dbReference type="ChEBI" id="CHEBI:57287"/>
        <dbReference type="ChEBI" id="CHEBI:57394"/>
        <dbReference type="ChEBI" id="CHEBI:57597"/>
        <dbReference type="ChEBI" id="CHEBI:74565"/>
    </reaction>
    <physiologicalReaction direction="left-to-right" evidence="14">
        <dbReference type="Rhea" id="RHEA:37196"/>
    </physiologicalReaction>
</comment>
<comment type="catalytic activity">
    <reaction evidence="4">
        <text>sn-glycerol 3-phosphate + (9Z)-octadecenoyl-CoA = 1-(9Z-octadecenoyl)-sn-glycero-3-phosphate + CoA</text>
        <dbReference type="Rhea" id="RHEA:37199"/>
        <dbReference type="ChEBI" id="CHEBI:57287"/>
        <dbReference type="ChEBI" id="CHEBI:57387"/>
        <dbReference type="ChEBI" id="CHEBI:57597"/>
        <dbReference type="ChEBI" id="CHEBI:74544"/>
    </reaction>
    <physiologicalReaction direction="left-to-right" evidence="14">
        <dbReference type="Rhea" id="RHEA:37200"/>
    </physiologicalReaction>
</comment>
<comment type="pathway">
    <text>Phospholipid metabolism; CDP-diacylglycerol biosynthesis; CDP-diacylglycerol from sn-glycerol 3-phosphate: step 1/3.</text>
</comment>
<comment type="subcellular location">
    <subcellularLocation>
        <location evidence="9 10 11">Lipid droplet</location>
    </subcellularLocation>
    <subcellularLocation>
        <location evidence="8 10">Endoplasmic reticulum membrane</location>
        <topology evidence="1">Multi-pass membrane protein</topology>
    </subcellularLocation>
    <text evidence="8">Localizes to both perinuclear and cortical endoplasmic reticulum.</text>
</comment>
<comment type="PTM">
    <text evidence="10">Phosphorylated at a conserved motif involving Ser-664, Ser-668 and Ser-671. This phosphorylation plays a critical role for efficient TAG mobilization. Phosphorylation deficiency at this motif increases the enzyme activity and consequently induces de novo formation of phosphatidic acid.</text>
</comment>
<comment type="miscellaneous">
    <text evidence="6">Present with 3100 molecules/cell in log phase SD medium.</text>
</comment>
<comment type="similarity">
    <text evidence="13">Belongs to the GPAT/DAPAT family.</text>
</comment>
<evidence type="ECO:0000255" key="1"/>
<evidence type="ECO:0000256" key="2">
    <source>
        <dbReference type="SAM" id="MobiDB-lite"/>
    </source>
</evidence>
<evidence type="ECO:0000269" key="3">
    <source>
    </source>
</evidence>
<evidence type="ECO:0000269" key="4">
    <source>
    </source>
</evidence>
<evidence type="ECO:0000269" key="5">
    <source>
    </source>
</evidence>
<evidence type="ECO:0000269" key="6">
    <source>
    </source>
</evidence>
<evidence type="ECO:0000269" key="7">
    <source>
    </source>
</evidence>
<evidence type="ECO:0000269" key="8">
    <source>
    </source>
</evidence>
<evidence type="ECO:0000269" key="9">
    <source>
    </source>
</evidence>
<evidence type="ECO:0000269" key="10">
    <source>
    </source>
</evidence>
<evidence type="ECO:0000269" key="11">
    <source>
    </source>
</evidence>
<evidence type="ECO:0000303" key="12">
    <source>
    </source>
</evidence>
<evidence type="ECO:0000305" key="13"/>
<evidence type="ECO:0000305" key="14">
    <source>
    </source>
</evidence>
<evidence type="ECO:0000305" key="15">
    <source>
    </source>
</evidence>
<evidence type="ECO:0000305" key="16">
    <source>
    </source>
</evidence>
<evidence type="ECO:0007744" key="17">
    <source>
    </source>
</evidence>
<evidence type="ECO:0007744" key="18">
    <source>
    </source>
</evidence>